<sequence>MTNTRKNHPLMKIMNNSLIDLPAPSNISSWWNFGSLLGACLTLQVITGLFLAMHYTADTTTAFSSITHICRDVNYGWIIRYLHANGASMFFLCLFIHIGRGLYYGSFTLLETWNIGIILLFTVMATAFMGYVLPWGQMSFWGATVITNLLSAIPYIGINLVEWIWGGFSVDKATLTRFFAFHFILPFIIMALVMVHLLFLHETGSNNPLGIPSNSDKIPFHPYYTIKDFLGLLLLILLTVTLVLFSPDLLTDPDNYMPANPLNTPPHIKPEWYFLFAYAILRSIPNKLGGVLALFFSILILAIIPLLHTAKQQSMIFRPLSQYLFWILIANLFILTWIGGQPVEHPYTIIGQTASILYFSLILIIMPLVNLIENKMLKW</sequence>
<reference key="1">
    <citation type="journal article" date="1996" name="Proc. Natl. Acad. Sci. U.S.A.">
        <title>Ancient single origin for Malagasy primates.</title>
        <authorList>
            <person name="Yoder A.D."/>
            <person name="Cartmill M."/>
            <person name="Ruvolo M."/>
            <person name="Smith K."/>
            <person name="Vilgalys R."/>
        </authorList>
    </citation>
    <scope>NUCLEOTIDE SEQUENCE [GENOMIC DNA]</scope>
</reference>
<reference key="2">
    <citation type="submission" date="2003-10" db="EMBL/GenBank/DDBJ databases">
        <title>61 primate SINEs and the evolution of strepsirrhines.</title>
        <authorList>
            <person name="Roos C."/>
            <person name="Schmitz J."/>
            <person name="Zischler H."/>
        </authorList>
    </citation>
    <scope>NUCLEOTIDE SEQUENCE [GENOMIC DNA]</scope>
</reference>
<keyword id="KW-0249">Electron transport</keyword>
<keyword id="KW-0349">Heme</keyword>
<keyword id="KW-0408">Iron</keyword>
<keyword id="KW-0472">Membrane</keyword>
<keyword id="KW-0479">Metal-binding</keyword>
<keyword id="KW-0496">Mitochondrion</keyword>
<keyword id="KW-0999">Mitochondrion inner membrane</keyword>
<keyword id="KW-0679">Respiratory chain</keyword>
<keyword id="KW-0812">Transmembrane</keyword>
<keyword id="KW-1133">Transmembrane helix</keyword>
<keyword id="KW-0813">Transport</keyword>
<keyword id="KW-0830">Ubiquinone</keyword>
<accession>Q36229</accession>
<dbReference type="EMBL" id="U53578">
    <property type="protein sequence ID" value="AAC50534.1"/>
    <property type="molecule type" value="Genomic_DNA"/>
</dbReference>
<dbReference type="EMBL" id="AY441450">
    <property type="protein sequence ID" value="AAS00131.1"/>
    <property type="molecule type" value="Genomic_DNA"/>
</dbReference>
<dbReference type="SMR" id="Q36229"/>
<dbReference type="GO" id="GO:0005743">
    <property type="term" value="C:mitochondrial inner membrane"/>
    <property type="evidence" value="ECO:0007669"/>
    <property type="project" value="UniProtKB-SubCell"/>
</dbReference>
<dbReference type="GO" id="GO:0045275">
    <property type="term" value="C:respiratory chain complex III"/>
    <property type="evidence" value="ECO:0007669"/>
    <property type="project" value="InterPro"/>
</dbReference>
<dbReference type="GO" id="GO:0046872">
    <property type="term" value="F:metal ion binding"/>
    <property type="evidence" value="ECO:0007669"/>
    <property type="project" value="UniProtKB-KW"/>
</dbReference>
<dbReference type="GO" id="GO:0008121">
    <property type="term" value="F:ubiquinol-cytochrome-c reductase activity"/>
    <property type="evidence" value="ECO:0007669"/>
    <property type="project" value="InterPro"/>
</dbReference>
<dbReference type="GO" id="GO:0006122">
    <property type="term" value="P:mitochondrial electron transport, ubiquinol to cytochrome c"/>
    <property type="evidence" value="ECO:0007669"/>
    <property type="project" value="TreeGrafter"/>
</dbReference>
<dbReference type="CDD" id="cd00290">
    <property type="entry name" value="cytochrome_b_C"/>
    <property type="match status" value="1"/>
</dbReference>
<dbReference type="CDD" id="cd00284">
    <property type="entry name" value="Cytochrome_b_N"/>
    <property type="match status" value="1"/>
</dbReference>
<dbReference type="FunFam" id="1.20.810.10:FF:000002">
    <property type="entry name" value="Cytochrome b"/>
    <property type="match status" value="1"/>
</dbReference>
<dbReference type="Gene3D" id="1.20.810.10">
    <property type="entry name" value="Cytochrome Bc1 Complex, Chain C"/>
    <property type="match status" value="1"/>
</dbReference>
<dbReference type="InterPro" id="IPR005798">
    <property type="entry name" value="Cyt_b/b6_C"/>
</dbReference>
<dbReference type="InterPro" id="IPR036150">
    <property type="entry name" value="Cyt_b/b6_C_sf"/>
</dbReference>
<dbReference type="InterPro" id="IPR005797">
    <property type="entry name" value="Cyt_b/b6_N"/>
</dbReference>
<dbReference type="InterPro" id="IPR027387">
    <property type="entry name" value="Cytb/b6-like_sf"/>
</dbReference>
<dbReference type="InterPro" id="IPR030689">
    <property type="entry name" value="Cytochrome_b"/>
</dbReference>
<dbReference type="InterPro" id="IPR048260">
    <property type="entry name" value="Cytochrome_b_C_euk/bac"/>
</dbReference>
<dbReference type="InterPro" id="IPR048259">
    <property type="entry name" value="Cytochrome_b_N_euk/bac"/>
</dbReference>
<dbReference type="InterPro" id="IPR016174">
    <property type="entry name" value="Di-haem_cyt_TM"/>
</dbReference>
<dbReference type="PANTHER" id="PTHR19271">
    <property type="entry name" value="CYTOCHROME B"/>
    <property type="match status" value="1"/>
</dbReference>
<dbReference type="PANTHER" id="PTHR19271:SF16">
    <property type="entry name" value="CYTOCHROME B"/>
    <property type="match status" value="1"/>
</dbReference>
<dbReference type="Pfam" id="PF00032">
    <property type="entry name" value="Cytochrom_B_C"/>
    <property type="match status" value="1"/>
</dbReference>
<dbReference type="Pfam" id="PF00033">
    <property type="entry name" value="Cytochrome_B"/>
    <property type="match status" value="1"/>
</dbReference>
<dbReference type="PIRSF" id="PIRSF038885">
    <property type="entry name" value="COB"/>
    <property type="match status" value="1"/>
</dbReference>
<dbReference type="SUPFAM" id="SSF81648">
    <property type="entry name" value="a domain/subunit of cytochrome bc1 complex (Ubiquinol-cytochrome c reductase)"/>
    <property type="match status" value="1"/>
</dbReference>
<dbReference type="SUPFAM" id="SSF81342">
    <property type="entry name" value="Transmembrane di-heme cytochromes"/>
    <property type="match status" value="1"/>
</dbReference>
<dbReference type="PROSITE" id="PS51003">
    <property type="entry name" value="CYTB_CTER"/>
    <property type="match status" value="1"/>
</dbReference>
<dbReference type="PROSITE" id="PS51002">
    <property type="entry name" value="CYTB_NTER"/>
    <property type="match status" value="1"/>
</dbReference>
<proteinExistence type="inferred from homology"/>
<feature type="chain" id="PRO_0000061711" description="Cytochrome b">
    <location>
        <begin position="1"/>
        <end position="379"/>
    </location>
</feature>
<feature type="transmembrane region" description="Helical" evidence="2">
    <location>
        <begin position="33"/>
        <end position="53"/>
    </location>
</feature>
<feature type="transmembrane region" description="Helical" evidence="2">
    <location>
        <begin position="77"/>
        <end position="98"/>
    </location>
</feature>
<feature type="transmembrane region" description="Helical" evidence="2">
    <location>
        <begin position="113"/>
        <end position="133"/>
    </location>
</feature>
<feature type="transmembrane region" description="Helical" evidence="2">
    <location>
        <begin position="178"/>
        <end position="198"/>
    </location>
</feature>
<feature type="transmembrane region" description="Helical" evidence="2">
    <location>
        <begin position="226"/>
        <end position="246"/>
    </location>
</feature>
<feature type="transmembrane region" description="Helical" evidence="2">
    <location>
        <begin position="288"/>
        <end position="308"/>
    </location>
</feature>
<feature type="transmembrane region" description="Helical" evidence="2">
    <location>
        <begin position="320"/>
        <end position="340"/>
    </location>
</feature>
<feature type="transmembrane region" description="Helical" evidence="2">
    <location>
        <begin position="347"/>
        <end position="367"/>
    </location>
</feature>
<feature type="binding site" description="axial binding residue" evidence="2">
    <location>
        <position position="83"/>
    </location>
    <ligand>
        <name>heme b</name>
        <dbReference type="ChEBI" id="CHEBI:60344"/>
        <label>b562</label>
    </ligand>
    <ligandPart>
        <name>Fe</name>
        <dbReference type="ChEBI" id="CHEBI:18248"/>
    </ligandPart>
</feature>
<feature type="binding site" description="axial binding residue" evidence="2">
    <location>
        <position position="97"/>
    </location>
    <ligand>
        <name>heme b</name>
        <dbReference type="ChEBI" id="CHEBI:60344"/>
        <label>b566</label>
    </ligand>
    <ligandPart>
        <name>Fe</name>
        <dbReference type="ChEBI" id="CHEBI:18248"/>
    </ligandPart>
</feature>
<feature type="binding site" description="axial binding residue" evidence="2">
    <location>
        <position position="182"/>
    </location>
    <ligand>
        <name>heme b</name>
        <dbReference type="ChEBI" id="CHEBI:60344"/>
        <label>b562</label>
    </ligand>
    <ligandPart>
        <name>Fe</name>
        <dbReference type="ChEBI" id="CHEBI:18248"/>
    </ligandPart>
</feature>
<feature type="binding site" description="axial binding residue" evidence="2">
    <location>
        <position position="196"/>
    </location>
    <ligand>
        <name>heme b</name>
        <dbReference type="ChEBI" id="CHEBI:60344"/>
        <label>b566</label>
    </ligand>
    <ligandPart>
        <name>Fe</name>
        <dbReference type="ChEBI" id="CHEBI:18248"/>
    </ligandPart>
</feature>
<feature type="binding site" evidence="2">
    <location>
        <position position="201"/>
    </location>
    <ligand>
        <name>a ubiquinone</name>
        <dbReference type="ChEBI" id="CHEBI:16389"/>
    </ligand>
</feature>
<gene>
    <name type="primary">MT-CYB</name>
    <name type="synonym">COB</name>
    <name type="synonym">CYTB</name>
    <name type="synonym">MTCYB</name>
</gene>
<name>CYB_VARRB</name>
<comment type="function">
    <text evidence="2">Component of the ubiquinol-cytochrome c reductase complex (complex III or cytochrome b-c1 complex) that is part of the mitochondrial respiratory chain. The b-c1 complex mediates electron transfer from ubiquinol to cytochrome c. Contributes to the generation of a proton gradient across the mitochondrial membrane that is then used for ATP synthesis.</text>
</comment>
<comment type="cofactor">
    <cofactor evidence="2">
        <name>heme b</name>
        <dbReference type="ChEBI" id="CHEBI:60344"/>
    </cofactor>
    <text evidence="2">Binds 2 heme b groups non-covalently.</text>
</comment>
<comment type="subunit">
    <text evidence="2">The cytochrome bc1 complex contains 11 subunits: 3 respiratory subunits (MT-CYB, CYC1 and UQCRFS1), 2 core proteins (UQCRC1 and UQCRC2) and 6 low-molecular weight proteins (UQCRH/QCR6, UQCRB/QCR7, UQCRQ/QCR8, UQCR10/QCR9, UQCR11/QCR10 and a cleavage product of UQCRFS1). This cytochrome bc1 complex then forms a dimer.</text>
</comment>
<comment type="subcellular location">
    <subcellularLocation>
        <location evidence="2">Mitochondrion inner membrane</location>
        <topology evidence="2">Multi-pass membrane protein</topology>
    </subcellularLocation>
</comment>
<comment type="miscellaneous">
    <text evidence="1">Heme 1 (or BL or b562) is low-potential and absorbs at about 562 nm, and heme 2 (or BH or b566) is high-potential and absorbs at about 566 nm.</text>
</comment>
<comment type="similarity">
    <text evidence="3 4">Belongs to the cytochrome b family.</text>
</comment>
<comment type="caution">
    <text evidence="2">The full-length protein contains only eight transmembrane helices, not nine as predicted by bioinformatics tools.</text>
</comment>
<organism>
    <name type="scientific">Varecia rubra</name>
    <name type="common">Red ruffed lemur</name>
    <name type="synonym">Varecia variegata rubra</name>
    <dbReference type="NCBI Taxonomy" id="554167"/>
    <lineage>
        <taxon>Eukaryota</taxon>
        <taxon>Metazoa</taxon>
        <taxon>Chordata</taxon>
        <taxon>Craniata</taxon>
        <taxon>Vertebrata</taxon>
        <taxon>Euteleostomi</taxon>
        <taxon>Mammalia</taxon>
        <taxon>Eutheria</taxon>
        <taxon>Euarchontoglires</taxon>
        <taxon>Primates</taxon>
        <taxon>Strepsirrhini</taxon>
        <taxon>Lemuriformes</taxon>
        <taxon>Lemuridae</taxon>
        <taxon>Varecia</taxon>
    </lineage>
</organism>
<protein>
    <recommendedName>
        <fullName>Cytochrome b</fullName>
    </recommendedName>
    <alternativeName>
        <fullName>Complex III subunit 3</fullName>
    </alternativeName>
    <alternativeName>
        <fullName>Complex III subunit III</fullName>
    </alternativeName>
    <alternativeName>
        <fullName>Cytochrome b-c1 complex subunit 3</fullName>
    </alternativeName>
    <alternativeName>
        <fullName>Ubiquinol-cytochrome-c reductase complex cytochrome b subunit</fullName>
    </alternativeName>
</protein>
<geneLocation type="mitochondrion"/>
<evidence type="ECO:0000250" key="1"/>
<evidence type="ECO:0000250" key="2">
    <source>
        <dbReference type="UniProtKB" id="P00157"/>
    </source>
</evidence>
<evidence type="ECO:0000255" key="3">
    <source>
        <dbReference type="PROSITE-ProRule" id="PRU00967"/>
    </source>
</evidence>
<evidence type="ECO:0000255" key="4">
    <source>
        <dbReference type="PROSITE-ProRule" id="PRU00968"/>
    </source>
</evidence>